<reference key="1">
    <citation type="journal article" date="2005" name="PLoS Biol.">
        <title>Major structural differences and novel potential virulence mechanisms from the genomes of multiple Campylobacter species.</title>
        <authorList>
            <person name="Fouts D.E."/>
            <person name="Mongodin E.F."/>
            <person name="Mandrell R.E."/>
            <person name="Miller W.G."/>
            <person name="Rasko D.A."/>
            <person name="Ravel J."/>
            <person name="Brinkac L.M."/>
            <person name="DeBoy R.T."/>
            <person name="Parker C.T."/>
            <person name="Daugherty S.C."/>
            <person name="Dodson R.J."/>
            <person name="Durkin A.S."/>
            <person name="Madupu R."/>
            <person name="Sullivan S.A."/>
            <person name="Shetty J.U."/>
            <person name="Ayodeji M.A."/>
            <person name="Shvartsbeyn A."/>
            <person name="Schatz M.C."/>
            <person name="Badger J.H."/>
            <person name="Fraser C.M."/>
            <person name="Nelson K.E."/>
        </authorList>
    </citation>
    <scope>NUCLEOTIDE SEQUENCE [LARGE SCALE GENOMIC DNA]</scope>
    <source>
        <strain>RM1221</strain>
    </source>
</reference>
<feature type="chain" id="PRO_0000237169" description="Large ribosomal subunit protein uL2">
    <location>
        <begin position="1"/>
        <end position="276"/>
    </location>
</feature>
<feature type="region of interest" description="Disordered" evidence="2">
    <location>
        <begin position="210"/>
        <end position="276"/>
    </location>
</feature>
<feature type="compositionally biased region" description="Basic and acidic residues" evidence="2">
    <location>
        <begin position="230"/>
        <end position="240"/>
    </location>
</feature>
<feature type="compositionally biased region" description="Basic residues" evidence="2">
    <location>
        <begin position="255"/>
        <end position="276"/>
    </location>
</feature>
<evidence type="ECO:0000255" key="1">
    <source>
        <dbReference type="HAMAP-Rule" id="MF_01320"/>
    </source>
</evidence>
<evidence type="ECO:0000256" key="2">
    <source>
        <dbReference type="SAM" id="MobiDB-lite"/>
    </source>
</evidence>
<evidence type="ECO:0000305" key="3"/>
<organism>
    <name type="scientific">Campylobacter jejuni (strain RM1221)</name>
    <dbReference type="NCBI Taxonomy" id="195099"/>
    <lineage>
        <taxon>Bacteria</taxon>
        <taxon>Pseudomonadati</taxon>
        <taxon>Campylobacterota</taxon>
        <taxon>Epsilonproteobacteria</taxon>
        <taxon>Campylobacterales</taxon>
        <taxon>Campylobacteraceae</taxon>
        <taxon>Campylobacter</taxon>
    </lineage>
</organism>
<name>RL2_CAMJR</name>
<proteinExistence type="inferred from homology"/>
<protein>
    <recommendedName>
        <fullName evidence="1">Large ribosomal subunit protein uL2</fullName>
    </recommendedName>
    <alternativeName>
        <fullName evidence="3">50S ribosomal protein L2</fullName>
    </alternativeName>
</protein>
<gene>
    <name evidence="1" type="primary">rplB</name>
    <name type="ordered locus">CJE1872</name>
</gene>
<dbReference type="EMBL" id="CP000025">
    <property type="protein sequence ID" value="AAW36294.1"/>
    <property type="molecule type" value="Genomic_DNA"/>
</dbReference>
<dbReference type="RefSeq" id="WP_002825501.1">
    <property type="nucleotide sequence ID" value="NC_003912.7"/>
</dbReference>
<dbReference type="SMR" id="Q5HS93"/>
<dbReference type="KEGG" id="cjr:CJE1872"/>
<dbReference type="HOGENOM" id="CLU_036235_2_1_7"/>
<dbReference type="GO" id="GO:0015934">
    <property type="term" value="C:large ribosomal subunit"/>
    <property type="evidence" value="ECO:0007669"/>
    <property type="project" value="InterPro"/>
</dbReference>
<dbReference type="GO" id="GO:0019843">
    <property type="term" value="F:rRNA binding"/>
    <property type="evidence" value="ECO:0007669"/>
    <property type="project" value="UniProtKB-UniRule"/>
</dbReference>
<dbReference type="GO" id="GO:0003735">
    <property type="term" value="F:structural constituent of ribosome"/>
    <property type="evidence" value="ECO:0007669"/>
    <property type="project" value="InterPro"/>
</dbReference>
<dbReference type="GO" id="GO:0016740">
    <property type="term" value="F:transferase activity"/>
    <property type="evidence" value="ECO:0007669"/>
    <property type="project" value="InterPro"/>
</dbReference>
<dbReference type="GO" id="GO:0002181">
    <property type="term" value="P:cytoplasmic translation"/>
    <property type="evidence" value="ECO:0007669"/>
    <property type="project" value="TreeGrafter"/>
</dbReference>
<dbReference type="FunFam" id="2.30.30.30:FF:000001">
    <property type="entry name" value="50S ribosomal protein L2"/>
    <property type="match status" value="1"/>
</dbReference>
<dbReference type="FunFam" id="2.40.50.140:FF:000003">
    <property type="entry name" value="50S ribosomal protein L2"/>
    <property type="match status" value="1"/>
</dbReference>
<dbReference type="FunFam" id="4.10.950.10:FF:000001">
    <property type="entry name" value="50S ribosomal protein L2"/>
    <property type="match status" value="1"/>
</dbReference>
<dbReference type="Gene3D" id="2.30.30.30">
    <property type="match status" value="1"/>
</dbReference>
<dbReference type="Gene3D" id="2.40.50.140">
    <property type="entry name" value="Nucleic acid-binding proteins"/>
    <property type="match status" value="1"/>
</dbReference>
<dbReference type="Gene3D" id="4.10.950.10">
    <property type="entry name" value="Ribosomal protein L2, domain 3"/>
    <property type="match status" value="1"/>
</dbReference>
<dbReference type="HAMAP" id="MF_01320_B">
    <property type="entry name" value="Ribosomal_uL2_B"/>
    <property type="match status" value="1"/>
</dbReference>
<dbReference type="InterPro" id="IPR012340">
    <property type="entry name" value="NA-bd_OB-fold"/>
</dbReference>
<dbReference type="InterPro" id="IPR014722">
    <property type="entry name" value="Rib_uL2_dom2"/>
</dbReference>
<dbReference type="InterPro" id="IPR002171">
    <property type="entry name" value="Ribosomal_uL2"/>
</dbReference>
<dbReference type="InterPro" id="IPR005880">
    <property type="entry name" value="Ribosomal_uL2_bac/org-type"/>
</dbReference>
<dbReference type="InterPro" id="IPR022669">
    <property type="entry name" value="Ribosomal_uL2_C"/>
</dbReference>
<dbReference type="InterPro" id="IPR022671">
    <property type="entry name" value="Ribosomal_uL2_CS"/>
</dbReference>
<dbReference type="InterPro" id="IPR014726">
    <property type="entry name" value="Ribosomal_uL2_dom3"/>
</dbReference>
<dbReference type="InterPro" id="IPR022666">
    <property type="entry name" value="Ribosomal_uL2_RNA-bd_dom"/>
</dbReference>
<dbReference type="InterPro" id="IPR008991">
    <property type="entry name" value="Translation_prot_SH3-like_sf"/>
</dbReference>
<dbReference type="NCBIfam" id="TIGR01171">
    <property type="entry name" value="rplB_bact"/>
    <property type="match status" value="1"/>
</dbReference>
<dbReference type="PANTHER" id="PTHR13691:SF5">
    <property type="entry name" value="LARGE RIBOSOMAL SUBUNIT PROTEIN UL2M"/>
    <property type="match status" value="1"/>
</dbReference>
<dbReference type="PANTHER" id="PTHR13691">
    <property type="entry name" value="RIBOSOMAL PROTEIN L2"/>
    <property type="match status" value="1"/>
</dbReference>
<dbReference type="Pfam" id="PF00181">
    <property type="entry name" value="Ribosomal_L2"/>
    <property type="match status" value="1"/>
</dbReference>
<dbReference type="Pfam" id="PF03947">
    <property type="entry name" value="Ribosomal_L2_C"/>
    <property type="match status" value="1"/>
</dbReference>
<dbReference type="PIRSF" id="PIRSF002158">
    <property type="entry name" value="Ribosomal_L2"/>
    <property type="match status" value="1"/>
</dbReference>
<dbReference type="SMART" id="SM01383">
    <property type="entry name" value="Ribosomal_L2"/>
    <property type="match status" value="1"/>
</dbReference>
<dbReference type="SMART" id="SM01382">
    <property type="entry name" value="Ribosomal_L2_C"/>
    <property type="match status" value="1"/>
</dbReference>
<dbReference type="SUPFAM" id="SSF50249">
    <property type="entry name" value="Nucleic acid-binding proteins"/>
    <property type="match status" value="1"/>
</dbReference>
<dbReference type="SUPFAM" id="SSF50104">
    <property type="entry name" value="Translation proteins SH3-like domain"/>
    <property type="match status" value="1"/>
</dbReference>
<dbReference type="PROSITE" id="PS00467">
    <property type="entry name" value="RIBOSOMAL_L2"/>
    <property type="match status" value="1"/>
</dbReference>
<comment type="function">
    <text evidence="1">One of the primary rRNA binding proteins. Required for association of the 30S and 50S subunits to form the 70S ribosome, for tRNA binding and peptide bond formation. It has been suggested to have peptidyltransferase activity; this is somewhat controversial. Makes several contacts with the 16S rRNA in the 70S ribosome.</text>
</comment>
<comment type="subunit">
    <text evidence="1">Part of the 50S ribosomal subunit. Forms a bridge to the 30S subunit in the 70S ribosome.</text>
</comment>
<comment type="similarity">
    <text evidence="1">Belongs to the universal ribosomal protein uL2 family.</text>
</comment>
<keyword id="KW-0687">Ribonucleoprotein</keyword>
<keyword id="KW-0689">Ribosomal protein</keyword>
<keyword id="KW-0694">RNA-binding</keyword>
<keyword id="KW-0699">rRNA-binding</keyword>
<accession>Q5HS93</accession>
<sequence length="276" mass="30420">MAIKTYKPYTPSRRYITGLSSEDITAKPSVRSLLVKLPAHAGRNSYGRITSRHKEAGAKKLYRIIDFKRRKFGIEGKVEAIEYDPYRNCRIALIAYKDGEKRYILQPRGLSVGDIVAAAESGLDIKPGNAMKLKNIPVGTIVHNVELKPGKGGQMIRSAGAYAQLMGKEEKYVILRLASGEMRQVLAECMASIGEVGNEEWANVTIGKAGRNRHRGIRPQTRGSAMNPVDHPHGGGEGKKNSGRHPVTPWGKPTKGAKTRRKKASDKLIISRRKGK</sequence>